<organism>
    <name type="scientific">Bacillus subtilis (strain 168)</name>
    <dbReference type="NCBI Taxonomy" id="224308"/>
    <lineage>
        <taxon>Bacteria</taxon>
        <taxon>Bacillati</taxon>
        <taxon>Bacillota</taxon>
        <taxon>Bacilli</taxon>
        <taxon>Bacillales</taxon>
        <taxon>Bacillaceae</taxon>
        <taxon>Bacillus</taxon>
    </lineage>
</organism>
<accession>P46322</accession>
<accession>O31772</accession>
<accession>Q79B77</accession>
<feature type="chain" id="PRO_0000056772" description="CDP-diacylglycerol--glycerol-3-phosphate 3-phosphatidyltransferase">
    <location>
        <begin position="1"/>
        <end position="193"/>
    </location>
</feature>
<feature type="transmembrane region" description="Helical" evidence="2">
    <location>
        <begin position="8"/>
        <end position="28"/>
    </location>
</feature>
<feature type="transmembrane region" description="Helical" evidence="2">
    <location>
        <begin position="39"/>
        <end position="59"/>
    </location>
</feature>
<feature type="transmembrane region" description="Helical" evidence="2">
    <location>
        <begin position="88"/>
        <end position="108"/>
    </location>
</feature>
<feature type="transmembrane region" description="Helical" evidence="2">
    <location>
        <begin position="157"/>
        <end position="177"/>
    </location>
</feature>
<gene>
    <name type="primary">pgsA</name>
    <name type="synonym">ymfN</name>
    <name type="ordered locus">BSU16920</name>
</gene>
<proteinExistence type="inferred from homology"/>
<keyword id="KW-1003">Cell membrane</keyword>
<keyword id="KW-0444">Lipid biosynthesis</keyword>
<keyword id="KW-0443">Lipid metabolism</keyword>
<keyword id="KW-0472">Membrane</keyword>
<keyword id="KW-0594">Phospholipid biosynthesis</keyword>
<keyword id="KW-1208">Phospholipid metabolism</keyword>
<keyword id="KW-1185">Reference proteome</keyword>
<keyword id="KW-0808">Transferase</keyword>
<keyword id="KW-0812">Transmembrane</keyword>
<keyword id="KW-1133">Transmembrane helix</keyword>
<reference key="1">
    <citation type="journal article" date="1995" name="FEBS Lett.">
        <title>Overexpression of phosphatidylglycerophosphate synthase restores protein translocation in a secG deletion mutant of Escherichia coli at low temperature.</title>
        <authorList>
            <person name="Kontinen V.P."/>
            <person name="Tokuda H."/>
        </authorList>
    </citation>
    <scope>NUCLEOTIDE SEQUENCE [GENOMIC DNA]</scope>
    <source>
        <strain>168 / Marburg / ATCC 6051 / DSM 10 / JCM 1465 / NBRC 13719 / NCIMB 3610 / NRRL NRS-744 / VKM B-501</strain>
    </source>
</reference>
<reference key="2">
    <citation type="submission" date="1997-01" db="EMBL/GenBank/DDBJ databases">
        <authorList>
            <person name="De Rossi E."/>
        </authorList>
    </citation>
    <scope>NUCLEOTIDE SEQUENCE [GENOMIC DNA]</scope>
    <source>
        <strain>PB1831</strain>
    </source>
</reference>
<reference key="3">
    <citation type="journal article" date="1997" name="Nature">
        <title>The complete genome sequence of the Gram-positive bacterium Bacillus subtilis.</title>
        <authorList>
            <person name="Kunst F."/>
            <person name="Ogasawara N."/>
            <person name="Moszer I."/>
            <person name="Albertini A.M."/>
            <person name="Alloni G."/>
            <person name="Azevedo V."/>
            <person name="Bertero M.G."/>
            <person name="Bessieres P."/>
            <person name="Bolotin A."/>
            <person name="Borchert S."/>
            <person name="Borriss R."/>
            <person name="Boursier L."/>
            <person name="Brans A."/>
            <person name="Braun M."/>
            <person name="Brignell S.C."/>
            <person name="Bron S."/>
            <person name="Brouillet S."/>
            <person name="Bruschi C.V."/>
            <person name="Caldwell B."/>
            <person name="Capuano V."/>
            <person name="Carter N.M."/>
            <person name="Choi S.-K."/>
            <person name="Codani J.-J."/>
            <person name="Connerton I.F."/>
            <person name="Cummings N.J."/>
            <person name="Daniel R.A."/>
            <person name="Denizot F."/>
            <person name="Devine K.M."/>
            <person name="Duesterhoeft A."/>
            <person name="Ehrlich S.D."/>
            <person name="Emmerson P.T."/>
            <person name="Entian K.-D."/>
            <person name="Errington J."/>
            <person name="Fabret C."/>
            <person name="Ferrari E."/>
            <person name="Foulger D."/>
            <person name="Fritz C."/>
            <person name="Fujita M."/>
            <person name="Fujita Y."/>
            <person name="Fuma S."/>
            <person name="Galizzi A."/>
            <person name="Galleron N."/>
            <person name="Ghim S.-Y."/>
            <person name="Glaser P."/>
            <person name="Goffeau A."/>
            <person name="Golightly E.J."/>
            <person name="Grandi G."/>
            <person name="Guiseppi G."/>
            <person name="Guy B.J."/>
            <person name="Haga K."/>
            <person name="Haiech J."/>
            <person name="Harwood C.R."/>
            <person name="Henaut A."/>
            <person name="Hilbert H."/>
            <person name="Holsappel S."/>
            <person name="Hosono S."/>
            <person name="Hullo M.-F."/>
            <person name="Itaya M."/>
            <person name="Jones L.-M."/>
            <person name="Joris B."/>
            <person name="Karamata D."/>
            <person name="Kasahara Y."/>
            <person name="Klaerr-Blanchard M."/>
            <person name="Klein C."/>
            <person name="Kobayashi Y."/>
            <person name="Koetter P."/>
            <person name="Koningstein G."/>
            <person name="Krogh S."/>
            <person name="Kumano M."/>
            <person name="Kurita K."/>
            <person name="Lapidus A."/>
            <person name="Lardinois S."/>
            <person name="Lauber J."/>
            <person name="Lazarevic V."/>
            <person name="Lee S.-M."/>
            <person name="Levine A."/>
            <person name="Liu H."/>
            <person name="Masuda S."/>
            <person name="Mauel C."/>
            <person name="Medigue C."/>
            <person name="Medina N."/>
            <person name="Mellado R.P."/>
            <person name="Mizuno M."/>
            <person name="Moestl D."/>
            <person name="Nakai S."/>
            <person name="Noback M."/>
            <person name="Noone D."/>
            <person name="O'Reilly M."/>
            <person name="Ogawa K."/>
            <person name="Ogiwara A."/>
            <person name="Oudega B."/>
            <person name="Park S.-H."/>
            <person name="Parro V."/>
            <person name="Pohl T.M."/>
            <person name="Portetelle D."/>
            <person name="Porwollik S."/>
            <person name="Prescott A.M."/>
            <person name="Presecan E."/>
            <person name="Pujic P."/>
            <person name="Purnelle B."/>
            <person name="Rapoport G."/>
            <person name="Rey M."/>
            <person name="Reynolds S."/>
            <person name="Rieger M."/>
            <person name="Rivolta C."/>
            <person name="Rocha E."/>
            <person name="Roche B."/>
            <person name="Rose M."/>
            <person name="Sadaie Y."/>
            <person name="Sato T."/>
            <person name="Scanlan E."/>
            <person name="Schleich S."/>
            <person name="Schroeter R."/>
            <person name="Scoffone F."/>
            <person name="Sekiguchi J."/>
            <person name="Sekowska A."/>
            <person name="Seror S.J."/>
            <person name="Serror P."/>
            <person name="Shin B.-S."/>
            <person name="Soldo B."/>
            <person name="Sorokin A."/>
            <person name="Tacconi E."/>
            <person name="Takagi T."/>
            <person name="Takahashi H."/>
            <person name="Takemaru K."/>
            <person name="Takeuchi M."/>
            <person name="Tamakoshi A."/>
            <person name="Tanaka T."/>
            <person name="Terpstra P."/>
            <person name="Tognoni A."/>
            <person name="Tosato V."/>
            <person name="Uchiyama S."/>
            <person name="Vandenbol M."/>
            <person name="Vannier F."/>
            <person name="Vassarotti A."/>
            <person name="Viari A."/>
            <person name="Wambutt R."/>
            <person name="Wedler E."/>
            <person name="Wedler H."/>
            <person name="Weitzenegger T."/>
            <person name="Winters P."/>
            <person name="Wipat A."/>
            <person name="Yamamoto H."/>
            <person name="Yamane K."/>
            <person name="Yasumoto K."/>
            <person name="Yata K."/>
            <person name="Yoshida K."/>
            <person name="Yoshikawa H.-F."/>
            <person name="Zumstein E."/>
            <person name="Yoshikawa H."/>
            <person name="Danchin A."/>
        </authorList>
    </citation>
    <scope>NUCLEOTIDE SEQUENCE [LARGE SCALE GENOMIC DNA]</scope>
    <source>
        <strain>168</strain>
    </source>
</reference>
<reference key="4">
    <citation type="journal article" date="2005" name="J. Bacteriol.">
        <title>Phosphatidylethanolamine domains and localization of phospholipid synthases in Bacillus subtilis membranes.</title>
        <authorList>
            <person name="Nishibori A."/>
            <person name="Kusaka J."/>
            <person name="Hara H."/>
            <person name="Umeda M."/>
            <person name="Matsumoto K."/>
        </authorList>
    </citation>
    <scope>SUBCELLULAR LOCATION</scope>
</reference>
<reference key="5">
    <citation type="journal article" date="2009" name="Microbiology">
        <title>From a consortium sequence to a unified sequence: the Bacillus subtilis 168 reference genome a decade later.</title>
        <authorList>
            <person name="Barbe V."/>
            <person name="Cruveiller S."/>
            <person name="Kunst F."/>
            <person name="Lenoble P."/>
            <person name="Meurice G."/>
            <person name="Sekowska A."/>
            <person name="Vallenet D."/>
            <person name="Wang T."/>
            <person name="Moszer I."/>
            <person name="Medigue C."/>
            <person name="Danchin A."/>
        </authorList>
    </citation>
    <scope>SEQUENCE REVISION TO 2; 45-47 AND 62</scope>
</reference>
<dbReference type="EC" id="2.7.8.5"/>
<dbReference type="EMBL" id="D50064">
    <property type="protein sequence ID" value="BAA46041.1"/>
    <property type="molecule type" value="Genomic_DNA"/>
</dbReference>
<dbReference type="EMBL" id="U87792">
    <property type="protein sequence ID" value="AAB47707.1"/>
    <property type="molecule type" value="Genomic_DNA"/>
</dbReference>
<dbReference type="EMBL" id="AL009126">
    <property type="protein sequence ID" value="CAB13565.2"/>
    <property type="molecule type" value="Genomic_DNA"/>
</dbReference>
<dbReference type="PIR" id="E69675">
    <property type="entry name" value="E69675"/>
</dbReference>
<dbReference type="RefSeq" id="NP_389574.2">
    <property type="nucleotide sequence ID" value="NC_000964.3"/>
</dbReference>
<dbReference type="RefSeq" id="WP_003244753.1">
    <property type="nucleotide sequence ID" value="NZ_OZ025638.1"/>
</dbReference>
<dbReference type="SMR" id="P46322"/>
<dbReference type="FunCoup" id="P46322">
    <property type="interactions" value="697"/>
</dbReference>
<dbReference type="STRING" id="224308.BSU16920"/>
<dbReference type="PaxDb" id="224308-BSU16920"/>
<dbReference type="EnsemblBacteria" id="CAB13565">
    <property type="protein sequence ID" value="CAB13565"/>
    <property type="gene ID" value="BSU_16920"/>
</dbReference>
<dbReference type="GeneID" id="939675"/>
<dbReference type="KEGG" id="bsu:BSU16920"/>
<dbReference type="PATRIC" id="fig|224308.179.peg.1833"/>
<dbReference type="eggNOG" id="COG0558">
    <property type="taxonomic scope" value="Bacteria"/>
</dbReference>
<dbReference type="InParanoid" id="P46322"/>
<dbReference type="OrthoDB" id="9796672at2"/>
<dbReference type="PhylomeDB" id="P46322"/>
<dbReference type="BioCyc" id="BSUB:BSU16920-MONOMER"/>
<dbReference type="BRENDA" id="2.7.8.5">
    <property type="organism ID" value="658"/>
</dbReference>
<dbReference type="UniPathway" id="UPA00084">
    <property type="reaction ID" value="UER00503"/>
</dbReference>
<dbReference type="Proteomes" id="UP000001570">
    <property type="component" value="Chromosome"/>
</dbReference>
<dbReference type="GO" id="GO:0005886">
    <property type="term" value="C:plasma membrane"/>
    <property type="evidence" value="ECO:0007669"/>
    <property type="project" value="UniProtKB-SubCell"/>
</dbReference>
<dbReference type="GO" id="GO:0008444">
    <property type="term" value="F:CDP-diacylglycerol-glycerol-3-phosphate 3-phosphatidyltransferase activity"/>
    <property type="evidence" value="ECO:0007669"/>
    <property type="project" value="UniProtKB-EC"/>
</dbReference>
<dbReference type="GO" id="GO:0046474">
    <property type="term" value="P:glycerophospholipid biosynthetic process"/>
    <property type="evidence" value="ECO:0000318"/>
    <property type="project" value="GO_Central"/>
</dbReference>
<dbReference type="GO" id="GO:0006655">
    <property type="term" value="P:phosphatidylglycerol biosynthetic process"/>
    <property type="evidence" value="ECO:0007669"/>
    <property type="project" value="UniProtKB-UniPathway"/>
</dbReference>
<dbReference type="FunFam" id="1.20.120.1760:FF:000004">
    <property type="entry name" value="CDP-diacylglycerol--glycerol-3-phosphate 3-phosphatidyltransferase"/>
    <property type="match status" value="1"/>
</dbReference>
<dbReference type="Gene3D" id="1.20.120.1760">
    <property type="match status" value="1"/>
</dbReference>
<dbReference type="InterPro" id="IPR050324">
    <property type="entry name" value="CDP-alcohol_PTase-I"/>
</dbReference>
<dbReference type="InterPro" id="IPR000462">
    <property type="entry name" value="CDP-OH_P_trans"/>
</dbReference>
<dbReference type="InterPro" id="IPR043130">
    <property type="entry name" value="CDP-OH_PTrfase_TM_dom"/>
</dbReference>
<dbReference type="InterPro" id="IPR048254">
    <property type="entry name" value="CDP_ALCOHOL_P_TRANSF_CS"/>
</dbReference>
<dbReference type="InterPro" id="IPR004570">
    <property type="entry name" value="Phosphatidylglycerol_P_synth"/>
</dbReference>
<dbReference type="NCBIfam" id="TIGR00560">
    <property type="entry name" value="pgsA"/>
    <property type="match status" value="1"/>
</dbReference>
<dbReference type="PANTHER" id="PTHR14269:SF62">
    <property type="entry name" value="CDP-DIACYLGLYCEROL--GLYCEROL-3-PHOSPHATE 3-PHOSPHATIDYLTRANSFERASE 1, CHLOROPLASTIC"/>
    <property type="match status" value="1"/>
</dbReference>
<dbReference type="PANTHER" id="PTHR14269">
    <property type="entry name" value="CDP-DIACYLGLYCEROL--GLYCEROL-3-PHOSPHATE 3-PHOSPHATIDYLTRANSFERASE-RELATED"/>
    <property type="match status" value="1"/>
</dbReference>
<dbReference type="Pfam" id="PF01066">
    <property type="entry name" value="CDP-OH_P_transf"/>
    <property type="match status" value="1"/>
</dbReference>
<dbReference type="PIRSF" id="PIRSF000847">
    <property type="entry name" value="Phos_ph_gly_syn"/>
    <property type="match status" value="1"/>
</dbReference>
<dbReference type="PROSITE" id="PS00379">
    <property type="entry name" value="CDP_ALCOHOL_P_TRANSF"/>
    <property type="match status" value="1"/>
</dbReference>
<sequence length="193" mass="21338">MFNLPNKITLARIALIPIFMIIMLAPFDWGRLEVGDESIPVAHLAGAILFIIASTTDWVDGYYARKLNLVTNFGKFLDPLADKLLVSAALIILVQFDLAPAWMVIVIISREFAVTGLRLVLAGTGEVVAANMLGKIKTWAQIIAVSALLLHNLPFELVSFPFADLALWVAVFFTVVSGWEYFSKNWEALKTSN</sequence>
<comment type="function">
    <text evidence="1">This protein catalyzes the committed step to the synthesis of the acidic phospholipids.</text>
</comment>
<comment type="catalytic activity">
    <reaction>
        <text>a CDP-1,2-diacyl-sn-glycerol + sn-glycerol 3-phosphate = a 1,2-diacyl-sn-glycero-3-phospho-(1'-sn-glycero-3'-phosphate) + CMP + H(+)</text>
        <dbReference type="Rhea" id="RHEA:12593"/>
        <dbReference type="ChEBI" id="CHEBI:15378"/>
        <dbReference type="ChEBI" id="CHEBI:57597"/>
        <dbReference type="ChEBI" id="CHEBI:58332"/>
        <dbReference type="ChEBI" id="CHEBI:60110"/>
        <dbReference type="ChEBI" id="CHEBI:60377"/>
        <dbReference type="EC" id="2.7.8.5"/>
    </reaction>
</comment>
<comment type="pathway">
    <text>Phospholipid metabolism; phosphatidylglycerol biosynthesis; phosphatidylglycerol from CDP-diacylglycerol: step 1/2.</text>
</comment>
<comment type="subcellular location">
    <subcellularLocation>
        <location evidence="4">Cell membrane</location>
        <topology evidence="4">Multi-pass membrane protein</topology>
    </subcellularLocation>
    <text evidence="3">Localized in the septal membrane. The septal localization depends on FtsZ.</text>
</comment>
<comment type="similarity">
    <text evidence="4">Belongs to the CDP-alcohol phosphatidyltransferase class-I family.</text>
</comment>
<evidence type="ECO:0000250" key="1"/>
<evidence type="ECO:0000255" key="2"/>
<evidence type="ECO:0000269" key="3">
    <source>
    </source>
</evidence>
<evidence type="ECO:0000305" key="4"/>
<name>PGSA_BACSU</name>
<protein>
    <recommendedName>
        <fullName>CDP-diacylglycerol--glycerol-3-phosphate 3-phosphatidyltransferase</fullName>
        <ecNumber>2.7.8.5</ecNumber>
    </recommendedName>
    <alternativeName>
        <fullName>Phosphatidylglycerophosphate synthase</fullName>
        <shortName>PGP synthase</shortName>
    </alternativeName>
</protein>